<keyword id="KW-0010">Activator</keyword>
<keyword id="KW-0238">DNA-binding</keyword>
<keyword id="KW-0804">Transcription</keyword>
<keyword id="KW-0805">Transcription regulation</keyword>
<organism>
    <name type="scientific">Escherichia coli (strain ATCC 8739 / DSM 1576 / NBRC 3972 / NCIMB 8545 / WDCM 00012 / Crooks)</name>
    <dbReference type="NCBI Taxonomy" id="481805"/>
    <lineage>
        <taxon>Bacteria</taxon>
        <taxon>Pseudomonadati</taxon>
        <taxon>Pseudomonadota</taxon>
        <taxon>Gammaproteobacteria</taxon>
        <taxon>Enterobacterales</taxon>
        <taxon>Enterobacteriaceae</taxon>
        <taxon>Escherichia</taxon>
    </lineage>
</organism>
<reference key="1">
    <citation type="submission" date="2008-02" db="EMBL/GenBank/DDBJ databases">
        <title>Complete sequence of Escherichia coli C str. ATCC 8739.</title>
        <authorList>
            <person name="Copeland A."/>
            <person name="Lucas S."/>
            <person name="Lapidus A."/>
            <person name="Glavina del Rio T."/>
            <person name="Dalin E."/>
            <person name="Tice H."/>
            <person name="Bruce D."/>
            <person name="Goodwin L."/>
            <person name="Pitluck S."/>
            <person name="Kiss H."/>
            <person name="Brettin T."/>
            <person name="Detter J.C."/>
            <person name="Han C."/>
            <person name="Kuske C.R."/>
            <person name="Schmutz J."/>
            <person name="Larimer F."/>
            <person name="Land M."/>
            <person name="Hauser L."/>
            <person name="Kyrpides N."/>
            <person name="Mikhailova N."/>
            <person name="Ingram L."/>
            <person name="Richardson P."/>
        </authorList>
    </citation>
    <scope>NUCLEOTIDE SEQUENCE [LARGE SCALE GENOMIC DNA]</scope>
    <source>
        <strain>ATCC 8739 / DSM 1576 / NBRC 3972 / NCIMB 8545 / WDCM 00012 / Crooks</strain>
    </source>
</reference>
<dbReference type="EMBL" id="CP000946">
    <property type="protein sequence ID" value="ACA76123.1"/>
    <property type="molecule type" value="Genomic_DNA"/>
</dbReference>
<dbReference type="RefSeq" id="WP_000462905.1">
    <property type="nucleotide sequence ID" value="NZ_MTFT01000027.1"/>
</dbReference>
<dbReference type="SMR" id="B1IQ31"/>
<dbReference type="GeneID" id="98390389"/>
<dbReference type="KEGG" id="ecl:EcolC_0445"/>
<dbReference type="HOGENOM" id="CLU_158040_3_0_6"/>
<dbReference type="GO" id="GO:0003700">
    <property type="term" value="F:DNA-binding transcription factor activity"/>
    <property type="evidence" value="ECO:0007669"/>
    <property type="project" value="UniProtKB-UniRule"/>
</dbReference>
<dbReference type="GO" id="GO:0043565">
    <property type="term" value="F:sequence-specific DNA binding"/>
    <property type="evidence" value="ECO:0007669"/>
    <property type="project" value="InterPro"/>
</dbReference>
<dbReference type="FunFam" id="1.10.10.60:FF:000006">
    <property type="entry name" value="DNA-binding protein Fis"/>
    <property type="match status" value="1"/>
</dbReference>
<dbReference type="Gene3D" id="1.10.10.60">
    <property type="entry name" value="Homeodomain-like"/>
    <property type="match status" value="1"/>
</dbReference>
<dbReference type="HAMAP" id="MF_00166">
    <property type="entry name" value="DNA_binding_Fis"/>
    <property type="match status" value="1"/>
</dbReference>
<dbReference type="InterPro" id="IPR005412">
    <property type="entry name" value="Fis_DNA-bd"/>
</dbReference>
<dbReference type="InterPro" id="IPR009057">
    <property type="entry name" value="Homeodomain-like_sf"/>
</dbReference>
<dbReference type="InterPro" id="IPR002197">
    <property type="entry name" value="HTH_Fis"/>
</dbReference>
<dbReference type="InterPro" id="IPR050207">
    <property type="entry name" value="Trans_regulatory_Fis"/>
</dbReference>
<dbReference type="NCBIfam" id="NF001659">
    <property type="entry name" value="PRK00430.1"/>
    <property type="match status" value="1"/>
</dbReference>
<dbReference type="PANTHER" id="PTHR47918">
    <property type="entry name" value="DNA-BINDING PROTEIN FIS"/>
    <property type="match status" value="1"/>
</dbReference>
<dbReference type="PANTHER" id="PTHR47918:SF1">
    <property type="entry name" value="DNA-BINDING PROTEIN FIS"/>
    <property type="match status" value="1"/>
</dbReference>
<dbReference type="Pfam" id="PF02954">
    <property type="entry name" value="HTH_8"/>
    <property type="match status" value="1"/>
</dbReference>
<dbReference type="PIRSF" id="PIRSF002097">
    <property type="entry name" value="DNA-binding_Fis"/>
    <property type="match status" value="1"/>
</dbReference>
<dbReference type="PRINTS" id="PR01591">
    <property type="entry name" value="DNABINDNGFIS"/>
</dbReference>
<dbReference type="PRINTS" id="PR01590">
    <property type="entry name" value="HTHFIS"/>
</dbReference>
<dbReference type="SUPFAM" id="SSF46689">
    <property type="entry name" value="Homeodomain-like"/>
    <property type="match status" value="1"/>
</dbReference>
<evidence type="ECO:0000255" key="1">
    <source>
        <dbReference type="HAMAP-Rule" id="MF_00166"/>
    </source>
</evidence>
<feature type="chain" id="PRO_1000076980" description="DNA-binding protein Fis">
    <location>
        <begin position="1"/>
        <end position="98"/>
    </location>
</feature>
<feature type="DNA-binding region" description="H-T-H motif" evidence="1">
    <location>
        <begin position="74"/>
        <end position="93"/>
    </location>
</feature>
<accession>B1IQ31</accession>
<gene>
    <name evidence="1" type="primary">fis</name>
    <name type="ordered locus">EcolC_0445</name>
</gene>
<protein>
    <recommendedName>
        <fullName evidence="1">DNA-binding protein Fis</fullName>
    </recommendedName>
</protein>
<sequence>MFEQRVNSDVLTVSTVNSQDQVTQKPLRDSVKQALKNYFAQLNGQDVNDLYELVLAEVEQPLLDMVMQYTRGNQTRAALMMGINRGTLRKKLKKYGMN</sequence>
<name>FIS_ECOLC</name>
<proteinExistence type="inferred from homology"/>
<comment type="function">
    <text evidence="1">Activates ribosomal RNA transcription. Plays a direct role in upstream activation of rRNA promoters.</text>
</comment>
<comment type="subunit">
    <text evidence="1">Homodimer.</text>
</comment>
<comment type="similarity">
    <text evidence="1">Belongs to the transcriptional regulatory Fis family.</text>
</comment>